<evidence type="ECO:0000255" key="1">
    <source>
        <dbReference type="HAMAP-Rule" id="MF_01343"/>
    </source>
</evidence>
<evidence type="ECO:0000256" key="2">
    <source>
        <dbReference type="SAM" id="MobiDB-lite"/>
    </source>
</evidence>
<evidence type="ECO:0000305" key="3"/>
<comment type="subunit">
    <text evidence="1">Part of the 30S ribosomal subunit.</text>
</comment>
<comment type="similarity">
    <text evidence="1">Belongs to the universal ribosomal protein uS15 family.</text>
</comment>
<sequence length="150" mass="17249">MPHRSRHKRGSSGSVRPATKTIPPWLSYSPEDVERLVVELARRGFTPSLIGVILRDQYGIPLVKIVTNKRITEILEENGLKPQIPEDLMALIRRAVNIRRHLEEHPKDMSAKKGLLLTESKIHRLIKYYKRTGVLPLDFTYSPERFAMAT</sequence>
<accession>A8MCD3</accession>
<name>RS15_CALMQ</name>
<reference key="1">
    <citation type="submission" date="2007-10" db="EMBL/GenBank/DDBJ databases">
        <title>Complete sequence of Caldivirga maquilingensis IC-167.</title>
        <authorList>
            <consortium name="US DOE Joint Genome Institute"/>
            <person name="Copeland A."/>
            <person name="Lucas S."/>
            <person name="Lapidus A."/>
            <person name="Barry K."/>
            <person name="Glavina del Rio T."/>
            <person name="Dalin E."/>
            <person name="Tice H."/>
            <person name="Pitluck S."/>
            <person name="Saunders E."/>
            <person name="Brettin T."/>
            <person name="Bruce D."/>
            <person name="Detter J.C."/>
            <person name="Han C."/>
            <person name="Schmutz J."/>
            <person name="Larimer F."/>
            <person name="Land M."/>
            <person name="Hauser L."/>
            <person name="Kyrpides N."/>
            <person name="Ivanova N."/>
            <person name="Biddle J.F."/>
            <person name="Zhang Z."/>
            <person name="Fitz-Gibbon S.T."/>
            <person name="Lowe T.M."/>
            <person name="Saltikov C."/>
            <person name="House C.H."/>
            <person name="Richardson P."/>
        </authorList>
    </citation>
    <scope>NUCLEOTIDE SEQUENCE [LARGE SCALE GENOMIC DNA]</scope>
    <source>
        <strain>ATCC 700844 / DSM 13496 / JCM 10307 / IC-167</strain>
    </source>
</reference>
<organism>
    <name type="scientific">Caldivirga maquilingensis (strain ATCC 700844 / DSM 13496 / JCM 10307 / IC-167)</name>
    <dbReference type="NCBI Taxonomy" id="397948"/>
    <lineage>
        <taxon>Archaea</taxon>
        <taxon>Thermoproteota</taxon>
        <taxon>Thermoprotei</taxon>
        <taxon>Thermoproteales</taxon>
        <taxon>Thermoproteaceae</taxon>
        <taxon>Caldivirga</taxon>
    </lineage>
</organism>
<dbReference type="EMBL" id="CP000852">
    <property type="protein sequence ID" value="ABW01439.1"/>
    <property type="molecule type" value="Genomic_DNA"/>
</dbReference>
<dbReference type="RefSeq" id="WP_012185659.1">
    <property type="nucleotide sequence ID" value="NC_009954.1"/>
</dbReference>
<dbReference type="SMR" id="A8MCD3"/>
<dbReference type="STRING" id="397948.Cmaq_0598"/>
<dbReference type="GeneID" id="5710074"/>
<dbReference type="KEGG" id="cma:Cmaq_0598"/>
<dbReference type="eggNOG" id="arCOG04185">
    <property type="taxonomic scope" value="Archaea"/>
</dbReference>
<dbReference type="HOGENOM" id="CLU_090139_2_0_2"/>
<dbReference type="OrthoDB" id="6533at2157"/>
<dbReference type="Proteomes" id="UP000001137">
    <property type="component" value="Chromosome"/>
</dbReference>
<dbReference type="GO" id="GO:0022627">
    <property type="term" value="C:cytosolic small ribosomal subunit"/>
    <property type="evidence" value="ECO:0007669"/>
    <property type="project" value="TreeGrafter"/>
</dbReference>
<dbReference type="GO" id="GO:0070181">
    <property type="term" value="F:small ribosomal subunit rRNA binding"/>
    <property type="evidence" value="ECO:0007669"/>
    <property type="project" value="TreeGrafter"/>
</dbReference>
<dbReference type="GO" id="GO:0003735">
    <property type="term" value="F:structural constituent of ribosome"/>
    <property type="evidence" value="ECO:0007669"/>
    <property type="project" value="InterPro"/>
</dbReference>
<dbReference type="GO" id="GO:0006412">
    <property type="term" value="P:translation"/>
    <property type="evidence" value="ECO:0007669"/>
    <property type="project" value="UniProtKB-UniRule"/>
</dbReference>
<dbReference type="CDD" id="cd00353">
    <property type="entry name" value="Ribosomal_S15p_S13e"/>
    <property type="match status" value="1"/>
</dbReference>
<dbReference type="FunFam" id="1.10.287.10:FF:000003">
    <property type="entry name" value="40S ribosomal protein S13"/>
    <property type="match status" value="1"/>
</dbReference>
<dbReference type="FunFam" id="4.10.860.130:FF:000001">
    <property type="entry name" value="40S ribosomal protein S13"/>
    <property type="match status" value="1"/>
</dbReference>
<dbReference type="Gene3D" id="4.10.860.130">
    <property type="match status" value="1"/>
</dbReference>
<dbReference type="Gene3D" id="1.10.287.10">
    <property type="entry name" value="S15/NS1, RNA-binding"/>
    <property type="match status" value="1"/>
</dbReference>
<dbReference type="HAMAP" id="MF_01343_A">
    <property type="entry name" value="Ribosomal_uS15_A"/>
    <property type="match status" value="1"/>
</dbReference>
<dbReference type="InterPro" id="IPR000589">
    <property type="entry name" value="Ribosomal_uS15"/>
</dbReference>
<dbReference type="InterPro" id="IPR023029">
    <property type="entry name" value="Ribosomal_uS15_arc_euk"/>
</dbReference>
<dbReference type="InterPro" id="IPR012606">
    <property type="entry name" value="Ribosomal_uS15_N"/>
</dbReference>
<dbReference type="InterPro" id="IPR009068">
    <property type="entry name" value="uS15_NS1_RNA-bd_sf"/>
</dbReference>
<dbReference type="NCBIfam" id="NF006331">
    <property type="entry name" value="PRK08561.1"/>
    <property type="match status" value="1"/>
</dbReference>
<dbReference type="PANTHER" id="PTHR11885">
    <property type="entry name" value="RIBOSOMAL PROTEIN S15P/S13E"/>
    <property type="match status" value="1"/>
</dbReference>
<dbReference type="PANTHER" id="PTHR11885:SF6">
    <property type="entry name" value="SMALL RIBOSOMAL SUBUNIT PROTEIN US15"/>
    <property type="match status" value="1"/>
</dbReference>
<dbReference type="Pfam" id="PF08069">
    <property type="entry name" value="Ribosomal_S13_N"/>
    <property type="match status" value="1"/>
</dbReference>
<dbReference type="Pfam" id="PF00312">
    <property type="entry name" value="Ribosomal_S15"/>
    <property type="match status" value="1"/>
</dbReference>
<dbReference type="SMART" id="SM01386">
    <property type="entry name" value="Ribosomal_S13_N"/>
    <property type="match status" value="1"/>
</dbReference>
<dbReference type="SMART" id="SM01387">
    <property type="entry name" value="Ribosomal_S15"/>
    <property type="match status" value="1"/>
</dbReference>
<dbReference type="SUPFAM" id="SSF47060">
    <property type="entry name" value="S15/NS1 RNA-binding domain"/>
    <property type="match status" value="1"/>
</dbReference>
<dbReference type="PROSITE" id="PS00362">
    <property type="entry name" value="RIBOSOMAL_S15"/>
    <property type="match status" value="1"/>
</dbReference>
<protein>
    <recommendedName>
        <fullName evidence="1">Small ribosomal subunit protein uS15</fullName>
    </recommendedName>
    <alternativeName>
        <fullName evidence="3">30S ribosomal protein S15</fullName>
    </alternativeName>
</protein>
<gene>
    <name evidence="1" type="primary">rps15</name>
    <name type="ordered locus">Cmaq_0598</name>
</gene>
<keyword id="KW-1185">Reference proteome</keyword>
<keyword id="KW-0687">Ribonucleoprotein</keyword>
<keyword id="KW-0689">Ribosomal protein</keyword>
<proteinExistence type="inferred from homology"/>
<feature type="chain" id="PRO_1000086792" description="Small ribosomal subunit protein uS15">
    <location>
        <begin position="1"/>
        <end position="150"/>
    </location>
</feature>
<feature type="region of interest" description="Disordered" evidence="2">
    <location>
        <begin position="1"/>
        <end position="21"/>
    </location>
</feature>
<feature type="compositionally biased region" description="Basic residues" evidence="2">
    <location>
        <begin position="1"/>
        <end position="10"/>
    </location>
</feature>